<protein>
    <recommendedName>
        <fullName>Taste receptor type 2 member 1</fullName>
        <shortName>T2R1</shortName>
    </recommendedName>
</protein>
<reference key="1">
    <citation type="journal article" date="2005" name="Mol. Biol. Evol.">
        <title>Evolution of bitter taste receptors in humans and apes.</title>
        <authorList>
            <person name="Fischer A."/>
            <person name="Gilad Y."/>
            <person name="Man O."/>
            <person name="Paeaebo S."/>
        </authorList>
    </citation>
    <scope>NUCLEOTIDE SEQUENCE [GENOMIC DNA]</scope>
</reference>
<feature type="chain" id="PRO_0000082190" description="Taste receptor type 2 member 1">
    <location>
        <begin position="1"/>
        <end position="299"/>
    </location>
</feature>
<feature type="topological domain" description="Extracellular" evidence="2">
    <location>
        <begin position="1"/>
        <end position="9"/>
    </location>
</feature>
<feature type="transmembrane region" description="Helical; Name=1" evidence="2">
    <location>
        <begin position="10"/>
        <end position="30"/>
    </location>
</feature>
<feature type="topological domain" description="Cytoplasmic" evidence="2">
    <location>
        <begin position="31"/>
        <end position="55"/>
    </location>
</feature>
<feature type="transmembrane region" description="Helical; Name=2" evidence="2">
    <location>
        <begin position="56"/>
        <end position="76"/>
    </location>
</feature>
<feature type="topological domain" description="Extracellular" evidence="2">
    <location>
        <begin position="77"/>
        <end position="81"/>
    </location>
</feature>
<feature type="transmembrane region" description="Helical; Name=3" evidence="2">
    <location>
        <begin position="82"/>
        <end position="102"/>
    </location>
</feature>
<feature type="topological domain" description="Cytoplasmic" evidence="2">
    <location>
        <begin position="103"/>
        <end position="124"/>
    </location>
</feature>
<feature type="transmembrane region" description="Helical; Name=4" evidence="2">
    <location>
        <begin position="125"/>
        <end position="145"/>
    </location>
</feature>
<feature type="topological domain" description="Extracellular" evidence="2">
    <location>
        <begin position="146"/>
        <end position="178"/>
    </location>
</feature>
<feature type="transmembrane region" description="Helical; Name=5" evidence="2">
    <location>
        <begin position="179"/>
        <end position="199"/>
    </location>
</feature>
<feature type="topological domain" description="Cytoplasmic" evidence="2">
    <location>
        <begin position="200"/>
        <end position="222"/>
    </location>
</feature>
<feature type="transmembrane region" description="Helical; Name=6" evidence="2">
    <location>
        <begin position="223"/>
        <end position="243"/>
    </location>
</feature>
<feature type="topological domain" description="Extracellular" evidence="2">
    <location>
        <begin position="244"/>
        <end position="257"/>
    </location>
</feature>
<feature type="transmembrane region" description="Helical; Name=7" evidence="2">
    <location>
        <begin position="258"/>
        <end position="278"/>
    </location>
</feature>
<feature type="topological domain" description="Cytoplasmic" evidence="2">
    <location>
        <begin position="279"/>
        <end position="299"/>
    </location>
</feature>
<feature type="glycosylation site" description="N-linked (GlcNAc...) asparagine" evidence="2">
    <location>
        <position position="163"/>
    </location>
</feature>
<gene>
    <name type="primary">TAS2R1</name>
</gene>
<organism>
    <name type="scientific">Pan troglodytes</name>
    <name type="common">Chimpanzee</name>
    <dbReference type="NCBI Taxonomy" id="9598"/>
    <lineage>
        <taxon>Eukaryota</taxon>
        <taxon>Metazoa</taxon>
        <taxon>Chordata</taxon>
        <taxon>Craniata</taxon>
        <taxon>Vertebrata</taxon>
        <taxon>Euteleostomi</taxon>
        <taxon>Mammalia</taxon>
        <taxon>Eutheria</taxon>
        <taxon>Euarchontoglires</taxon>
        <taxon>Primates</taxon>
        <taxon>Haplorrhini</taxon>
        <taxon>Catarrhini</taxon>
        <taxon>Hominidae</taxon>
        <taxon>Pan</taxon>
    </lineage>
</organism>
<sequence>MLESHLIIYFLLAVIQFLLGIFTNGIIVVVNGIDLIKHRKMAPLDLLLSCLAVSRIFLQLFIFYVNVIVIFFIEFIMCSANCAILLFVNELELWLATWLGVFYCAKVASVRHPLFIWLKMRISKLVPWMILGSLLYVSMICVFHSKYAGFMVPHFLRNFFSQNATIQKEDTLAIQIFSFVAEFSVPLLIFLVAVLLLIFSLGRHTRQMRNTVAGSRVPGRGAPISALLSILSFLILYFSHCMIKVFLSSLKFHVRRFIFLFFILVIGIYPSGHSLILILGNPKLKQNAKKFLLHSKCCQ</sequence>
<keyword id="KW-0297">G-protein coupled receptor</keyword>
<keyword id="KW-0325">Glycoprotein</keyword>
<keyword id="KW-0472">Membrane</keyword>
<keyword id="KW-0675">Receptor</keyword>
<keyword id="KW-1185">Reference proteome</keyword>
<keyword id="KW-0716">Sensory transduction</keyword>
<keyword id="KW-0919">Taste</keyword>
<keyword id="KW-0807">Transducer</keyword>
<keyword id="KW-0812">Transmembrane</keyword>
<keyword id="KW-1133">Transmembrane helix</keyword>
<accession>Q646H0</accession>
<comment type="function">
    <text evidence="1">Receptor that may play a role in the perception of bitterness and is gustducin-linked. May play a role in sensing the chemical composition of the gastrointestinal content. The activity of this receptor may stimulate alpha gustducin, mediate PLC-beta-2 activation and lead to the gating of TRPM5 (By similarity).</text>
</comment>
<comment type="subcellular location">
    <subcellularLocation>
        <location>Membrane</location>
        <topology>Multi-pass membrane protein</topology>
    </subcellularLocation>
</comment>
<comment type="miscellaneous">
    <text>Most taste cells may be activated by a limited number of bitter compounds; individual taste cells can discriminate among bitter stimuli.</text>
</comment>
<comment type="similarity">
    <text evidence="3">Belongs to the G-protein coupled receptor T2R family.</text>
</comment>
<proteinExistence type="inferred from homology"/>
<name>TA2R1_PANTR</name>
<evidence type="ECO:0000250" key="1"/>
<evidence type="ECO:0000255" key="2"/>
<evidence type="ECO:0000305" key="3"/>
<dbReference type="EMBL" id="AY724810">
    <property type="protein sequence ID" value="AAU21049.1"/>
    <property type="molecule type" value="Genomic_DNA"/>
</dbReference>
<dbReference type="RefSeq" id="NP_001009100.1">
    <property type="nucleotide sequence ID" value="NM_001009100.1"/>
</dbReference>
<dbReference type="SMR" id="Q646H0"/>
<dbReference type="FunCoup" id="Q646H0">
    <property type="interactions" value="456"/>
</dbReference>
<dbReference type="STRING" id="9598.ENSPTRP00000028692"/>
<dbReference type="GlyCosmos" id="Q646H0">
    <property type="glycosylation" value="1 site, No reported glycans"/>
</dbReference>
<dbReference type="PaxDb" id="9598-ENSPTRP00000028692"/>
<dbReference type="GeneID" id="462383"/>
<dbReference type="KEGG" id="ptr:462383"/>
<dbReference type="CTD" id="50834"/>
<dbReference type="eggNOG" id="ENOG502S2SI">
    <property type="taxonomic scope" value="Eukaryota"/>
</dbReference>
<dbReference type="InParanoid" id="Q646H0"/>
<dbReference type="OrthoDB" id="15422at9604"/>
<dbReference type="Proteomes" id="UP000002277">
    <property type="component" value="Unplaced"/>
</dbReference>
<dbReference type="GO" id="GO:0016020">
    <property type="term" value="C:membrane"/>
    <property type="evidence" value="ECO:0000318"/>
    <property type="project" value="GO_Central"/>
</dbReference>
<dbReference type="GO" id="GO:0005886">
    <property type="term" value="C:plasma membrane"/>
    <property type="evidence" value="ECO:0007669"/>
    <property type="project" value="UniProtKB-ARBA"/>
</dbReference>
<dbReference type="GO" id="GO:0033038">
    <property type="term" value="F:bitter taste receptor activity"/>
    <property type="evidence" value="ECO:0000318"/>
    <property type="project" value="GO_Central"/>
</dbReference>
<dbReference type="GO" id="GO:0004930">
    <property type="term" value="F:G protein-coupled receptor activity"/>
    <property type="evidence" value="ECO:0007669"/>
    <property type="project" value="UniProtKB-KW"/>
</dbReference>
<dbReference type="GO" id="GO:0001580">
    <property type="term" value="P:detection of chemical stimulus involved in sensory perception of bitter taste"/>
    <property type="evidence" value="ECO:0000318"/>
    <property type="project" value="GO_Central"/>
</dbReference>
<dbReference type="CDD" id="cd15016">
    <property type="entry name" value="7tm_TAS2R1"/>
    <property type="match status" value="1"/>
</dbReference>
<dbReference type="FunFam" id="1.20.1070.10:FF:000055">
    <property type="entry name" value="Taste receptor type 2"/>
    <property type="match status" value="1"/>
</dbReference>
<dbReference type="Gene3D" id="1.20.1070.10">
    <property type="entry name" value="Rhodopsin 7-helix transmembrane proteins"/>
    <property type="match status" value="1"/>
</dbReference>
<dbReference type="InterPro" id="IPR007960">
    <property type="entry name" value="TAS2R"/>
</dbReference>
<dbReference type="PANTHER" id="PTHR11394">
    <property type="entry name" value="TASTE RECEPTOR TYPE 2"/>
    <property type="match status" value="1"/>
</dbReference>
<dbReference type="PANTHER" id="PTHR11394:SF149">
    <property type="entry name" value="TASTE RECEPTOR TYPE 2 MEMBER 1"/>
    <property type="match status" value="1"/>
</dbReference>
<dbReference type="Pfam" id="PF05296">
    <property type="entry name" value="TAS2R"/>
    <property type="match status" value="1"/>
</dbReference>
<dbReference type="SUPFAM" id="SSF81321">
    <property type="entry name" value="Family A G protein-coupled receptor-like"/>
    <property type="match status" value="1"/>
</dbReference>